<keyword id="KW-0963">Cytoplasm</keyword>
<keyword id="KW-0227">DNA damage</keyword>
<keyword id="KW-0234">DNA repair</keyword>
<keyword id="KW-0378">Hydrolase</keyword>
<organism>
    <name type="scientific">Haemophilus influenzae (strain PittEE)</name>
    <dbReference type="NCBI Taxonomy" id="374930"/>
    <lineage>
        <taxon>Bacteria</taxon>
        <taxon>Pseudomonadati</taxon>
        <taxon>Pseudomonadota</taxon>
        <taxon>Gammaproteobacteria</taxon>
        <taxon>Pasteurellales</taxon>
        <taxon>Pasteurellaceae</taxon>
        <taxon>Haemophilus</taxon>
    </lineage>
</organism>
<evidence type="ECO:0000255" key="1">
    <source>
        <dbReference type="HAMAP-Rule" id="MF_00148"/>
    </source>
</evidence>
<protein>
    <recommendedName>
        <fullName evidence="1">Uracil-DNA glycosylase</fullName>
        <shortName evidence="1">UDG</shortName>
        <ecNumber evidence="1">3.2.2.27</ecNumber>
    </recommendedName>
</protein>
<feature type="chain" id="PRO_1000009897" description="Uracil-DNA glycosylase">
    <location>
        <begin position="1"/>
        <end position="219"/>
    </location>
</feature>
<feature type="active site" description="Proton acceptor" evidence="1">
    <location>
        <position position="61"/>
    </location>
</feature>
<dbReference type="EC" id="3.2.2.27" evidence="1"/>
<dbReference type="EMBL" id="CP000671">
    <property type="protein sequence ID" value="ABQ98071.1"/>
    <property type="molecule type" value="Genomic_DNA"/>
</dbReference>
<dbReference type="SMR" id="A5UBC0"/>
<dbReference type="KEGG" id="hip:CGSHiEE_03220"/>
<dbReference type="HOGENOM" id="CLU_032162_3_0_6"/>
<dbReference type="GO" id="GO:0005737">
    <property type="term" value="C:cytoplasm"/>
    <property type="evidence" value="ECO:0007669"/>
    <property type="project" value="UniProtKB-SubCell"/>
</dbReference>
<dbReference type="GO" id="GO:0004844">
    <property type="term" value="F:uracil DNA N-glycosylase activity"/>
    <property type="evidence" value="ECO:0007669"/>
    <property type="project" value="UniProtKB-UniRule"/>
</dbReference>
<dbReference type="GO" id="GO:0097510">
    <property type="term" value="P:base-excision repair, AP site formation via deaminated base removal"/>
    <property type="evidence" value="ECO:0007669"/>
    <property type="project" value="TreeGrafter"/>
</dbReference>
<dbReference type="CDD" id="cd10027">
    <property type="entry name" value="UDG-F1-like"/>
    <property type="match status" value="1"/>
</dbReference>
<dbReference type="FunFam" id="3.40.470.10:FF:000001">
    <property type="entry name" value="Uracil-DNA glycosylase"/>
    <property type="match status" value="1"/>
</dbReference>
<dbReference type="Gene3D" id="3.40.470.10">
    <property type="entry name" value="Uracil-DNA glycosylase-like domain"/>
    <property type="match status" value="1"/>
</dbReference>
<dbReference type="HAMAP" id="MF_00148">
    <property type="entry name" value="UDG"/>
    <property type="match status" value="1"/>
</dbReference>
<dbReference type="InterPro" id="IPR002043">
    <property type="entry name" value="UDG_fam1"/>
</dbReference>
<dbReference type="InterPro" id="IPR018085">
    <property type="entry name" value="Ura-DNA_Glyclase_AS"/>
</dbReference>
<dbReference type="InterPro" id="IPR005122">
    <property type="entry name" value="Uracil-DNA_glycosylase-like"/>
</dbReference>
<dbReference type="InterPro" id="IPR036895">
    <property type="entry name" value="Uracil-DNA_glycosylase-like_sf"/>
</dbReference>
<dbReference type="NCBIfam" id="NF003588">
    <property type="entry name" value="PRK05254.1-1"/>
    <property type="match status" value="1"/>
</dbReference>
<dbReference type="NCBIfam" id="NF003589">
    <property type="entry name" value="PRK05254.1-2"/>
    <property type="match status" value="1"/>
</dbReference>
<dbReference type="NCBIfam" id="NF003591">
    <property type="entry name" value="PRK05254.1-4"/>
    <property type="match status" value="1"/>
</dbReference>
<dbReference type="NCBIfam" id="NF003592">
    <property type="entry name" value="PRK05254.1-5"/>
    <property type="match status" value="1"/>
</dbReference>
<dbReference type="NCBIfam" id="TIGR00628">
    <property type="entry name" value="ung"/>
    <property type="match status" value="1"/>
</dbReference>
<dbReference type="PANTHER" id="PTHR11264">
    <property type="entry name" value="URACIL-DNA GLYCOSYLASE"/>
    <property type="match status" value="1"/>
</dbReference>
<dbReference type="PANTHER" id="PTHR11264:SF0">
    <property type="entry name" value="URACIL-DNA GLYCOSYLASE"/>
    <property type="match status" value="1"/>
</dbReference>
<dbReference type="Pfam" id="PF03167">
    <property type="entry name" value="UDG"/>
    <property type="match status" value="1"/>
</dbReference>
<dbReference type="SMART" id="SM00986">
    <property type="entry name" value="UDG"/>
    <property type="match status" value="1"/>
</dbReference>
<dbReference type="SMART" id="SM00987">
    <property type="entry name" value="UreE_C"/>
    <property type="match status" value="1"/>
</dbReference>
<dbReference type="SUPFAM" id="SSF52141">
    <property type="entry name" value="Uracil-DNA glycosylase-like"/>
    <property type="match status" value="1"/>
</dbReference>
<dbReference type="PROSITE" id="PS00130">
    <property type="entry name" value="U_DNA_GLYCOSYLASE"/>
    <property type="match status" value="1"/>
</dbReference>
<sequence length="219" mass="24953">MKNWTDVIGKEKEQPYFQHALQQVHLARANGKTIYPPQEEVFNAFKYTAFEDVKVVILGQDPYHGANQAHGLAFSVKPEVAIPPSLLNMYKELTQDISGFQMPSNGYLVKWAEQGVLLLNTVLTVERGMAHSHANLGWERFTDKVIAVLNEHREKLVFLLWGSHAQKKDKLIDRTRHLVLTAPHPSPLSAHRGFFGCHHFSKTNSYLESNGMKPIDWQI</sequence>
<reference key="1">
    <citation type="journal article" date="2007" name="Genome Biol.">
        <title>Characterization and modeling of the Haemophilus influenzae core and supragenomes based on the complete genomic sequences of Rd and 12 clinical nontypeable strains.</title>
        <authorList>
            <person name="Hogg J.S."/>
            <person name="Hu F.Z."/>
            <person name="Janto B."/>
            <person name="Boissy R."/>
            <person name="Hayes J."/>
            <person name="Keefe R."/>
            <person name="Post J.C."/>
            <person name="Ehrlich G.D."/>
        </authorList>
    </citation>
    <scope>NUCLEOTIDE SEQUENCE [LARGE SCALE GENOMIC DNA]</scope>
    <source>
        <strain>PittEE</strain>
    </source>
</reference>
<gene>
    <name evidence="1" type="primary">ung</name>
    <name type="ordered locus">CGSHiEE_03220</name>
</gene>
<comment type="function">
    <text evidence="1">Excises uracil residues from the DNA which can arise as a result of misincorporation of dUMP residues by DNA polymerase or due to deamination of cytosine.</text>
</comment>
<comment type="catalytic activity">
    <reaction evidence="1">
        <text>Hydrolyzes single-stranded DNA or mismatched double-stranded DNA and polynucleotides, releasing free uracil.</text>
        <dbReference type="EC" id="3.2.2.27"/>
    </reaction>
</comment>
<comment type="subcellular location">
    <subcellularLocation>
        <location evidence="1">Cytoplasm</location>
    </subcellularLocation>
</comment>
<comment type="similarity">
    <text evidence="1">Belongs to the uracil-DNA glycosylase (UDG) superfamily. UNG family.</text>
</comment>
<name>UNG_HAEIE</name>
<proteinExistence type="inferred from homology"/>
<accession>A5UBC0</accession>